<reference evidence="5" key="1">
    <citation type="journal article" date="2011" name="Proc. Natl. Acad. Sci. U.S.A.">
        <title>Discovery of an unusual biosynthetic origin for circular proteins in legumes.</title>
        <authorList>
            <person name="Poth A.G."/>
            <person name="Colgrave M.L."/>
            <person name="Lyons R.E."/>
            <person name="Daly N.L."/>
            <person name="Craik D.J."/>
        </authorList>
    </citation>
    <scope>PROTEIN SEQUENCE</scope>
    <scope>CYCLIZATION</scope>
    <scope>MASS SPECTROMETRY</scope>
    <source>
        <tissue evidence="3">Leaf</tissue>
    </source>
</reference>
<evidence type="ECO:0000250" key="1">
    <source>
        <dbReference type="UniProtKB" id="P86899"/>
    </source>
</evidence>
<evidence type="ECO:0000255" key="2">
    <source>
        <dbReference type="PROSITE-ProRule" id="PRU00395"/>
    </source>
</evidence>
<evidence type="ECO:0000269" key="3">
    <source>
    </source>
</evidence>
<evidence type="ECO:0000303" key="4">
    <source>
    </source>
</evidence>
<evidence type="ECO:0000305" key="5"/>
<accession>P86902</accession>
<organism>
    <name type="scientific">Clitoria ternatea</name>
    <name type="common">Butterfly pea</name>
    <dbReference type="NCBI Taxonomy" id="43366"/>
    <lineage>
        <taxon>Eukaryota</taxon>
        <taxon>Viridiplantae</taxon>
        <taxon>Streptophyta</taxon>
        <taxon>Embryophyta</taxon>
        <taxon>Tracheophyta</taxon>
        <taxon>Spermatophyta</taxon>
        <taxon>Magnoliopsida</taxon>
        <taxon>eudicotyledons</taxon>
        <taxon>Gunneridae</taxon>
        <taxon>Pentapetalae</taxon>
        <taxon>rosids</taxon>
        <taxon>fabids</taxon>
        <taxon>Fabales</taxon>
        <taxon>Fabaceae</taxon>
        <taxon>Papilionoideae</taxon>
        <taxon>50 kb inversion clade</taxon>
        <taxon>NPAAA clade</taxon>
        <taxon>indigoferoid/millettioid clade</taxon>
        <taxon>Phaseoleae</taxon>
        <taxon>Clitoria</taxon>
    </lineage>
</organism>
<proteinExistence type="evidence at protein level"/>
<feature type="peptide" id="PRO_0000412641" description="Cyclotide cter-P" evidence="2 3">
    <location>
        <begin position="1"/>
        <end position="30"/>
    </location>
</feature>
<feature type="disulfide bond" evidence="1 2">
    <location>
        <begin position="4"/>
        <end position="20"/>
    </location>
</feature>
<feature type="disulfide bond" evidence="1 2">
    <location>
        <begin position="8"/>
        <end position="22"/>
    </location>
</feature>
<feature type="disulfide bond" evidence="1 2">
    <location>
        <begin position="13"/>
        <end position="27"/>
    </location>
</feature>
<feature type="cross-link" description="Cyclopeptide (Gly-Asn)" evidence="3">
    <location>
        <begin position="1"/>
        <end position="30"/>
    </location>
</feature>
<comment type="function">
    <text evidence="1 2">Probably participates in a plant defense mechanism.</text>
</comment>
<comment type="subcellular location">
    <subcellularLocation>
        <location evidence="1">Secreted</location>
    </subcellularLocation>
</comment>
<comment type="domain">
    <text evidence="5">The presence of a 'disulfide through disulfide knot' structurally defines this protein as a knottin.</text>
</comment>
<comment type="PTM">
    <text evidence="2 3">This is a cyclic peptide.</text>
</comment>
<comment type="mass spectrometry" mass="3097.43" method="MALDI" evidence="3"/>
<comment type="similarity">
    <text evidence="2">Belongs to the cyclotide family. Bracelet subfamily.</text>
</comment>
<comment type="caution">
    <text evidence="5">This peptide is cyclic. The start position was chosen by similarity to cyclotide cter-A for which the DNA sequence is known.</text>
</comment>
<keyword id="KW-0903">Direct protein sequencing</keyword>
<keyword id="KW-1015">Disulfide bond</keyword>
<keyword id="KW-0960">Knottin</keyword>
<keyword id="KW-0558">Oxidation</keyword>
<keyword id="KW-0611">Plant defense</keyword>
<keyword id="KW-0964">Secreted</keyword>
<protein>
    <recommendedName>
        <fullName evidence="4">Cyclotide cter-P</fullName>
    </recommendedName>
</protein>
<sequence length="30" mass="3124">GIPCGESCVFIPCITAAIGCSCKSKVCYRN</sequence>
<name>CYCP_CLITE</name>
<dbReference type="SMR" id="P86902"/>
<dbReference type="GO" id="GO:0005576">
    <property type="term" value="C:extracellular region"/>
    <property type="evidence" value="ECO:0007669"/>
    <property type="project" value="UniProtKB-SubCell"/>
</dbReference>
<dbReference type="GO" id="GO:0006952">
    <property type="term" value="P:defense response"/>
    <property type="evidence" value="ECO:0007669"/>
    <property type="project" value="UniProtKB-KW"/>
</dbReference>
<dbReference type="InterPro" id="IPR005535">
    <property type="entry name" value="Cyclotide"/>
</dbReference>
<dbReference type="InterPro" id="IPR012323">
    <property type="entry name" value="Cyclotide_bracelet_CS"/>
</dbReference>
<dbReference type="InterPro" id="IPR036146">
    <property type="entry name" value="Cyclotide_sf"/>
</dbReference>
<dbReference type="Pfam" id="PF03784">
    <property type="entry name" value="Cyclotide"/>
    <property type="match status" value="1"/>
</dbReference>
<dbReference type="PIRSF" id="PIRSF037891">
    <property type="entry name" value="Cycloviolacin"/>
    <property type="match status" value="1"/>
</dbReference>
<dbReference type="SUPFAM" id="SSF57038">
    <property type="entry name" value="Cyclotides"/>
    <property type="match status" value="1"/>
</dbReference>
<dbReference type="PROSITE" id="PS51052">
    <property type="entry name" value="CYCLOTIDE"/>
    <property type="match status" value="1"/>
</dbReference>
<dbReference type="PROSITE" id="PS60008">
    <property type="entry name" value="CYCLOTIDE_BRACELET"/>
    <property type="match status" value="1"/>
</dbReference>